<keyword id="KW-0004">4Fe-4S</keyword>
<keyword id="KW-0067">ATP-binding</keyword>
<keyword id="KW-0149">Chlorophyll biosynthesis</keyword>
<keyword id="KW-0408">Iron</keyword>
<keyword id="KW-0411">Iron-sulfur</keyword>
<keyword id="KW-0460">Magnesium</keyword>
<keyword id="KW-0479">Metal-binding</keyword>
<keyword id="KW-0547">Nucleotide-binding</keyword>
<keyword id="KW-0560">Oxidoreductase</keyword>
<keyword id="KW-0602">Photosynthesis</keyword>
<proteinExistence type="inferred from homology"/>
<name>CHLL_PROMS</name>
<feature type="chain" id="PRO_0000324058" description="Light-independent protochlorophyllide reductase iron-sulfur ATP-binding protein">
    <location>
        <begin position="1"/>
        <end position="295"/>
    </location>
</feature>
<feature type="binding site" evidence="1">
    <location>
        <begin position="39"/>
        <end position="44"/>
    </location>
    <ligand>
        <name>ATP</name>
        <dbReference type="ChEBI" id="CHEBI:30616"/>
    </ligand>
</feature>
<feature type="binding site" evidence="1">
    <location>
        <position position="43"/>
    </location>
    <ligand>
        <name>Mg(2+)</name>
        <dbReference type="ChEBI" id="CHEBI:18420"/>
    </ligand>
</feature>
<feature type="binding site" evidence="1">
    <location>
        <position position="68"/>
    </location>
    <ligand>
        <name>ATP</name>
        <dbReference type="ChEBI" id="CHEBI:30616"/>
    </ligand>
</feature>
<feature type="binding site" evidence="1">
    <location>
        <position position="124"/>
    </location>
    <ligand>
        <name>[4Fe-4S] cluster</name>
        <dbReference type="ChEBI" id="CHEBI:49883"/>
        <note>ligand shared between dimeric partners</note>
    </ligand>
</feature>
<feature type="binding site" evidence="1">
    <location>
        <position position="158"/>
    </location>
    <ligand>
        <name>[4Fe-4S] cluster</name>
        <dbReference type="ChEBI" id="CHEBI:49883"/>
        <note>ligand shared between dimeric partners</note>
    </ligand>
</feature>
<feature type="binding site" evidence="1">
    <location>
        <begin position="209"/>
        <end position="210"/>
    </location>
    <ligand>
        <name>ATP</name>
        <dbReference type="ChEBI" id="CHEBI:30616"/>
    </ligand>
</feature>
<gene>
    <name evidence="1" type="primary">chlL</name>
    <name type="ordered locus">A9601_05991</name>
</gene>
<reference key="1">
    <citation type="journal article" date="2007" name="PLoS Genet.">
        <title>Patterns and implications of gene gain and loss in the evolution of Prochlorococcus.</title>
        <authorList>
            <person name="Kettler G.C."/>
            <person name="Martiny A.C."/>
            <person name="Huang K."/>
            <person name="Zucker J."/>
            <person name="Coleman M.L."/>
            <person name="Rodrigue S."/>
            <person name="Chen F."/>
            <person name="Lapidus A."/>
            <person name="Ferriera S."/>
            <person name="Johnson J."/>
            <person name="Steglich C."/>
            <person name="Church G.M."/>
            <person name="Richardson P."/>
            <person name="Chisholm S.W."/>
        </authorList>
    </citation>
    <scope>NUCLEOTIDE SEQUENCE [LARGE SCALE GENOMIC DNA]</scope>
    <source>
        <strain>AS9601</strain>
    </source>
</reference>
<dbReference type="EC" id="1.3.7.7" evidence="1"/>
<dbReference type="EMBL" id="CP000551">
    <property type="protein sequence ID" value="ABM69885.1"/>
    <property type="molecule type" value="Genomic_DNA"/>
</dbReference>
<dbReference type="SMR" id="A2BQ24"/>
<dbReference type="STRING" id="146891.A9601_05991"/>
<dbReference type="KEGG" id="pmb:A9601_05991"/>
<dbReference type="eggNOG" id="COG1348">
    <property type="taxonomic scope" value="Bacteria"/>
</dbReference>
<dbReference type="HOGENOM" id="CLU_059373_2_0_3"/>
<dbReference type="OrthoDB" id="9778641at2"/>
<dbReference type="UniPathway" id="UPA00670"/>
<dbReference type="Proteomes" id="UP000002590">
    <property type="component" value="Chromosome"/>
</dbReference>
<dbReference type="GO" id="GO:0051539">
    <property type="term" value="F:4 iron, 4 sulfur cluster binding"/>
    <property type="evidence" value="ECO:0007669"/>
    <property type="project" value="UniProtKB-UniRule"/>
</dbReference>
<dbReference type="GO" id="GO:0005524">
    <property type="term" value="F:ATP binding"/>
    <property type="evidence" value="ECO:0007669"/>
    <property type="project" value="UniProtKB-UniRule"/>
</dbReference>
<dbReference type="GO" id="GO:0046872">
    <property type="term" value="F:metal ion binding"/>
    <property type="evidence" value="ECO:0007669"/>
    <property type="project" value="UniProtKB-KW"/>
</dbReference>
<dbReference type="GO" id="GO:0016730">
    <property type="term" value="F:oxidoreductase activity, acting on iron-sulfur proteins as donors"/>
    <property type="evidence" value="ECO:0007669"/>
    <property type="project" value="InterPro"/>
</dbReference>
<dbReference type="GO" id="GO:0016636">
    <property type="term" value="F:oxidoreductase activity, acting on the CH-CH group of donors, iron-sulfur protein as acceptor"/>
    <property type="evidence" value="ECO:0007669"/>
    <property type="project" value="UniProtKB-UniRule"/>
</dbReference>
<dbReference type="GO" id="GO:0036068">
    <property type="term" value="P:light-independent chlorophyll biosynthetic process"/>
    <property type="evidence" value="ECO:0007669"/>
    <property type="project" value="UniProtKB-UniRule"/>
</dbReference>
<dbReference type="GO" id="GO:0019685">
    <property type="term" value="P:photosynthesis, dark reaction"/>
    <property type="evidence" value="ECO:0007669"/>
    <property type="project" value="InterPro"/>
</dbReference>
<dbReference type="CDD" id="cd02032">
    <property type="entry name" value="Bchl-like"/>
    <property type="match status" value="1"/>
</dbReference>
<dbReference type="Gene3D" id="3.40.50.300">
    <property type="entry name" value="P-loop containing nucleotide triphosphate hydrolases"/>
    <property type="match status" value="1"/>
</dbReference>
<dbReference type="HAMAP" id="MF_00355">
    <property type="entry name" value="ChlL_BchL"/>
    <property type="match status" value="1"/>
</dbReference>
<dbReference type="InterPro" id="IPR030655">
    <property type="entry name" value="NifH/chlL_CS"/>
</dbReference>
<dbReference type="InterPro" id="IPR000392">
    <property type="entry name" value="NifH/frxC"/>
</dbReference>
<dbReference type="InterPro" id="IPR027417">
    <property type="entry name" value="P-loop_NTPase"/>
</dbReference>
<dbReference type="InterPro" id="IPR005971">
    <property type="entry name" value="Protochlorophyllide_ATP-bd"/>
</dbReference>
<dbReference type="NCBIfam" id="TIGR01281">
    <property type="entry name" value="DPOR_bchL"/>
    <property type="match status" value="1"/>
</dbReference>
<dbReference type="PANTHER" id="PTHR42864">
    <property type="entry name" value="LIGHT-INDEPENDENT PROTOCHLOROPHYLLIDE REDUCTASE IRON-SULFUR ATP-BINDING PROTEIN"/>
    <property type="match status" value="1"/>
</dbReference>
<dbReference type="PANTHER" id="PTHR42864:SF2">
    <property type="entry name" value="LIGHT-INDEPENDENT PROTOCHLOROPHYLLIDE REDUCTASE IRON-SULFUR ATP-BINDING PROTEIN"/>
    <property type="match status" value="1"/>
</dbReference>
<dbReference type="Pfam" id="PF00142">
    <property type="entry name" value="Fer4_NifH"/>
    <property type="match status" value="1"/>
</dbReference>
<dbReference type="PIRSF" id="PIRSF000363">
    <property type="entry name" value="Nitrogenase_iron"/>
    <property type="match status" value="1"/>
</dbReference>
<dbReference type="PRINTS" id="PR00091">
    <property type="entry name" value="NITROGNASEII"/>
</dbReference>
<dbReference type="SUPFAM" id="SSF52540">
    <property type="entry name" value="P-loop containing nucleoside triphosphate hydrolases"/>
    <property type="match status" value="1"/>
</dbReference>
<dbReference type="PROSITE" id="PS00746">
    <property type="entry name" value="NIFH_FRXC_1"/>
    <property type="match status" value="1"/>
</dbReference>
<dbReference type="PROSITE" id="PS00692">
    <property type="entry name" value="NIFH_FRXC_2"/>
    <property type="match status" value="1"/>
</dbReference>
<dbReference type="PROSITE" id="PS51026">
    <property type="entry name" value="NIFH_FRXC_3"/>
    <property type="match status" value="1"/>
</dbReference>
<accession>A2BQ24</accession>
<protein>
    <recommendedName>
        <fullName evidence="1">Light-independent protochlorophyllide reductase iron-sulfur ATP-binding protein</fullName>
        <shortName evidence="1">DPOR subunit L</shortName>
        <shortName evidence="1">LI-POR subunit L</shortName>
        <ecNumber evidence="1">1.3.7.7</ecNumber>
    </recommendedName>
</protein>
<sequence length="295" mass="32348">MTSTINRPLDGEGSVQVKQDPKINIEEGALVIAVYGKGGIGKSTTSSNLSAAFSKLGKKVLQIGCDPKHDSTFTLTHKMVPTVIDILEEVDFHSEELRPTDFMFEGFNGVMCVESGGPPAGTGCGGYVTGQTVKLLKEHHLLEDTDVVIFDVLGDVVCGGFAAPLQHANYCLIVTANDFDSIFAMNRIVSAIKAKAKNYKVRLGGVVANRSKDTDQIDKFNERTGLKTMAHFKDVDAIRRSRLKKCTIFEMEPTEDVIEVQNEYLSLAKNMLENVEPLEGNPLKDREIFDLLGFD</sequence>
<comment type="function">
    <text evidence="1">Component of the dark-operative protochlorophyllide reductase (DPOR) that uses Mg-ATP and reduced ferredoxin to reduce ring D of protochlorophyllide (Pchlide) to form chlorophyllide a (Chlide). This reaction is light-independent. The L component serves as a unique electron donor to the NB-component of the complex, and binds Mg-ATP.</text>
</comment>
<comment type="catalytic activity">
    <reaction evidence="1">
        <text>chlorophyllide a + oxidized 2[4Fe-4S]-[ferredoxin] + 2 ADP + 2 phosphate = protochlorophyllide a + reduced 2[4Fe-4S]-[ferredoxin] + 2 ATP + 2 H2O</text>
        <dbReference type="Rhea" id="RHEA:28202"/>
        <dbReference type="Rhea" id="RHEA-COMP:10002"/>
        <dbReference type="Rhea" id="RHEA-COMP:10004"/>
        <dbReference type="ChEBI" id="CHEBI:15377"/>
        <dbReference type="ChEBI" id="CHEBI:30616"/>
        <dbReference type="ChEBI" id="CHEBI:33722"/>
        <dbReference type="ChEBI" id="CHEBI:33723"/>
        <dbReference type="ChEBI" id="CHEBI:43474"/>
        <dbReference type="ChEBI" id="CHEBI:83348"/>
        <dbReference type="ChEBI" id="CHEBI:83350"/>
        <dbReference type="ChEBI" id="CHEBI:456216"/>
        <dbReference type="EC" id="1.3.7.7"/>
    </reaction>
</comment>
<comment type="cofactor">
    <cofactor evidence="1">
        <name>[4Fe-4S] cluster</name>
        <dbReference type="ChEBI" id="CHEBI:49883"/>
    </cofactor>
    <text evidence="1">Binds 1 [4Fe-4S] cluster per dimer.</text>
</comment>
<comment type="pathway">
    <text evidence="1">Porphyrin-containing compound metabolism; chlorophyll biosynthesis (light-independent).</text>
</comment>
<comment type="subunit">
    <text evidence="1">Homodimer. Protochlorophyllide reductase is composed of three subunits; ChlL, ChlN and ChlB.</text>
</comment>
<comment type="similarity">
    <text evidence="1">Belongs to the NifH/BchL/ChlL family.</text>
</comment>
<organism>
    <name type="scientific">Prochlorococcus marinus (strain AS9601)</name>
    <dbReference type="NCBI Taxonomy" id="146891"/>
    <lineage>
        <taxon>Bacteria</taxon>
        <taxon>Bacillati</taxon>
        <taxon>Cyanobacteriota</taxon>
        <taxon>Cyanophyceae</taxon>
        <taxon>Synechococcales</taxon>
        <taxon>Prochlorococcaceae</taxon>
        <taxon>Prochlorococcus</taxon>
    </lineage>
</organism>
<evidence type="ECO:0000255" key="1">
    <source>
        <dbReference type="HAMAP-Rule" id="MF_00355"/>
    </source>
</evidence>